<dbReference type="EMBL" id="AL513382">
    <property type="protein sequence ID" value="CAD08173.1"/>
    <property type="molecule type" value="Genomic_DNA"/>
</dbReference>
<dbReference type="EMBL" id="AE014613">
    <property type="protein sequence ID" value="AAO71532.1"/>
    <property type="molecule type" value="Genomic_DNA"/>
</dbReference>
<dbReference type="RefSeq" id="NP_458460.1">
    <property type="nucleotide sequence ID" value="NC_003198.1"/>
</dbReference>
<dbReference type="RefSeq" id="WP_000579838.1">
    <property type="nucleotide sequence ID" value="NZ_WSUR01000046.1"/>
</dbReference>
<dbReference type="SMR" id="P60445"/>
<dbReference type="STRING" id="220341.gene:17588186"/>
<dbReference type="KEGG" id="stt:t4065"/>
<dbReference type="KEGG" id="sty:STY4358"/>
<dbReference type="PATRIC" id="fig|220341.7.peg.4454"/>
<dbReference type="eggNOG" id="COG0087">
    <property type="taxonomic scope" value="Bacteria"/>
</dbReference>
<dbReference type="HOGENOM" id="CLU_044142_4_1_6"/>
<dbReference type="OMA" id="GKNIPCT"/>
<dbReference type="OrthoDB" id="9806135at2"/>
<dbReference type="Proteomes" id="UP000000541">
    <property type="component" value="Chromosome"/>
</dbReference>
<dbReference type="Proteomes" id="UP000002670">
    <property type="component" value="Chromosome"/>
</dbReference>
<dbReference type="GO" id="GO:0022625">
    <property type="term" value="C:cytosolic large ribosomal subunit"/>
    <property type="evidence" value="ECO:0007669"/>
    <property type="project" value="TreeGrafter"/>
</dbReference>
<dbReference type="GO" id="GO:0019843">
    <property type="term" value="F:rRNA binding"/>
    <property type="evidence" value="ECO:0007669"/>
    <property type="project" value="UniProtKB-UniRule"/>
</dbReference>
<dbReference type="GO" id="GO:0003735">
    <property type="term" value="F:structural constituent of ribosome"/>
    <property type="evidence" value="ECO:0007669"/>
    <property type="project" value="InterPro"/>
</dbReference>
<dbReference type="GO" id="GO:0006412">
    <property type="term" value="P:translation"/>
    <property type="evidence" value="ECO:0007669"/>
    <property type="project" value="UniProtKB-UniRule"/>
</dbReference>
<dbReference type="FunFam" id="2.40.30.10:FF:000004">
    <property type="entry name" value="50S ribosomal protein L3"/>
    <property type="match status" value="1"/>
</dbReference>
<dbReference type="FunFam" id="3.30.160.810:FF:000001">
    <property type="entry name" value="50S ribosomal protein L3"/>
    <property type="match status" value="1"/>
</dbReference>
<dbReference type="Gene3D" id="3.30.160.810">
    <property type="match status" value="1"/>
</dbReference>
<dbReference type="Gene3D" id="2.40.30.10">
    <property type="entry name" value="Translation factors"/>
    <property type="match status" value="1"/>
</dbReference>
<dbReference type="HAMAP" id="MF_01325_B">
    <property type="entry name" value="Ribosomal_uL3_B"/>
    <property type="match status" value="1"/>
</dbReference>
<dbReference type="InterPro" id="IPR000597">
    <property type="entry name" value="Ribosomal_uL3"/>
</dbReference>
<dbReference type="InterPro" id="IPR019927">
    <property type="entry name" value="Ribosomal_uL3_bac/org-type"/>
</dbReference>
<dbReference type="InterPro" id="IPR019926">
    <property type="entry name" value="Ribosomal_uL3_CS"/>
</dbReference>
<dbReference type="InterPro" id="IPR009000">
    <property type="entry name" value="Transl_B-barrel_sf"/>
</dbReference>
<dbReference type="NCBIfam" id="TIGR03625">
    <property type="entry name" value="L3_bact"/>
    <property type="match status" value="1"/>
</dbReference>
<dbReference type="PANTHER" id="PTHR11229">
    <property type="entry name" value="50S RIBOSOMAL PROTEIN L3"/>
    <property type="match status" value="1"/>
</dbReference>
<dbReference type="PANTHER" id="PTHR11229:SF16">
    <property type="entry name" value="LARGE RIBOSOMAL SUBUNIT PROTEIN UL3C"/>
    <property type="match status" value="1"/>
</dbReference>
<dbReference type="Pfam" id="PF00297">
    <property type="entry name" value="Ribosomal_L3"/>
    <property type="match status" value="1"/>
</dbReference>
<dbReference type="SUPFAM" id="SSF50447">
    <property type="entry name" value="Translation proteins"/>
    <property type="match status" value="1"/>
</dbReference>
<dbReference type="PROSITE" id="PS00474">
    <property type="entry name" value="RIBOSOMAL_L3"/>
    <property type="match status" value="1"/>
</dbReference>
<proteinExistence type="inferred from homology"/>
<name>RL3_SALTI</name>
<keyword id="KW-0488">Methylation</keyword>
<keyword id="KW-0687">Ribonucleoprotein</keyword>
<keyword id="KW-0689">Ribosomal protein</keyword>
<keyword id="KW-0694">RNA-binding</keyword>
<keyword id="KW-0699">rRNA-binding</keyword>
<gene>
    <name evidence="1" type="primary">rplC</name>
    <name type="ordered locus">STY4358</name>
    <name type="ordered locus">t4065</name>
</gene>
<protein>
    <recommendedName>
        <fullName evidence="1">Large ribosomal subunit protein uL3</fullName>
    </recommendedName>
    <alternativeName>
        <fullName evidence="2">50S ribosomal protein L3</fullName>
    </alternativeName>
</protein>
<reference key="1">
    <citation type="journal article" date="2001" name="Nature">
        <title>Complete genome sequence of a multiple drug resistant Salmonella enterica serovar Typhi CT18.</title>
        <authorList>
            <person name="Parkhill J."/>
            <person name="Dougan G."/>
            <person name="James K.D."/>
            <person name="Thomson N.R."/>
            <person name="Pickard D."/>
            <person name="Wain J."/>
            <person name="Churcher C.M."/>
            <person name="Mungall K.L."/>
            <person name="Bentley S.D."/>
            <person name="Holden M.T.G."/>
            <person name="Sebaihia M."/>
            <person name="Baker S."/>
            <person name="Basham D."/>
            <person name="Brooks K."/>
            <person name="Chillingworth T."/>
            <person name="Connerton P."/>
            <person name="Cronin A."/>
            <person name="Davis P."/>
            <person name="Davies R.M."/>
            <person name="Dowd L."/>
            <person name="White N."/>
            <person name="Farrar J."/>
            <person name="Feltwell T."/>
            <person name="Hamlin N."/>
            <person name="Haque A."/>
            <person name="Hien T.T."/>
            <person name="Holroyd S."/>
            <person name="Jagels K."/>
            <person name="Krogh A."/>
            <person name="Larsen T.S."/>
            <person name="Leather S."/>
            <person name="Moule S."/>
            <person name="O'Gaora P."/>
            <person name="Parry C."/>
            <person name="Quail M.A."/>
            <person name="Rutherford K.M."/>
            <person name="Simmonds M."/>
            <person name="Skelton J."/>
            <person name="Stevens K."/>
            <person name="Whitehead S."/>
            <person name="Barrell B.G."/>
        </authorList>
    </citation>
    <scope>NUCLEOTIDE SEQUENCE [LARGE SCALE GENOMIC DNA]</scope>
    <source>
        <strain>CT18</strain>
    </source>
</reference>
<reference key="2">
    <citation type="journal article" date="2003" name="J. Bacteriol.">
        <title>Comparative genomics of Salmonella enterica serovar Typhi strains Ty2 and CT18.</title>
        <authorList>
            <person name="Deng W."/>
            <person name="Liou S.-R."/>
            <person name="Plunkett G. III"/>
            <person name="Mayhew G.F."/>
            <person name="Rose D.J."/>
            <person name="Burland V."/>
            <person name="Kodoyianni V."/>
            <person name="Schwartz D.C."/>
            <person name="Blattner F.R."/>
        </authorList>
    </citation>
    <scope>NUCLEOTIDE SEQUENCE [LARGE SCALE GENOMIC DNA]</scope>
    <source>
        <strain>ATCC 700931 / Ty2</strain>
    </source>
</reference>
<evidence type="ECO:0000255" key="1">
    <source>
        <dbReference type="HAMAP-Rule" id="MF_01325"/>
    </source>
</evidence>
<evidence type="ECO:0000305" key="2"/>
<sequence length="209" mass="22248">MIGLVGKKVGMTRIFTEDGVSIPVTVIEVEANRVTQVKDLANDGYRAVQVTTGAKKANRVTKPEAGHFAKAGVEAGRGLWEFRLAEGEEYTVGQSISVELFADVKKVDVTGTSKGKGFAGTVKRWNFRTQDATHGNSLSHRVPGSIGQNQTPGKVFKGKKMAGQMGNERVTVQSLDVVRVDAERNLLLVKGGVPGATGCDLIVKPAVKA</sequence>
<comment type="function">
    <text evidence="1">One of the primary rRNA binding proteins, it binds directly near the 3'-end of the 23S rRNA, where it nucleates assembly of the 50S subunit.</text>
</comment>
<comment type="subunit">
    <text evidence="1">Part of the 50S ribosomal subunit. Forms a cluster with proteins L14 and L19.</text>
</comment>
<comment type="PTM">
    <text evidence="1">Methylated by PrmB.</text>
</comment>
<comment type="similarity">
    <text evidence="1">Belongs to the universal ribosomal protein uL3 family.</text>
</comment>
<accession>P60445</accession>
<accession>Q8XH20</accession>
<organism>
    <name type="scientific">Salmonella typhi</name>
    <dbReference type="NCBI Taxonomy" id="90370"/>
    <lineage>
        <taxon>Bacteria</taxon>
        <taxon>Pseudomonadati</taxon>
        <taxon>Pseudomonadota</taxon>
        <taxon>Gammaproteobacteria</taxon>
        <taxon>Enterobacterales</taxon>
        <taxon>Enterobacteriaceae</taxon>
        <taxon>Salmonella</taxon>
    </lineage>
</organism>
<feature type="chain" id="PRO_0000077148" description="Large ribosomal subunit protein uL3">
    <location>
        <begin position="1"/>
        <end position="209"/>
    </location>
</feature>
<feature type="modified residue" description="N5-methylglutamine" evidence="1">
    <location>
        <position position="150"/>
    </location>
</feature>